<gene>
    <name type="primary">sec11</name>
    <name type="ORF">AFUB_036330</name>
</gene>
<reference key="1">
    <citation type="journal article" date="2008" name="PLoS Genet.">
        <title>Genomic islands in the pathogenic filamentous fungus Aspergillus fumigatus.</title>
        <authorList>
            <person name="Fedorova N.D."/>
            <person name="Khaldi N."/>
            <person name="Joardar V.S."/>
            <person name="Maiti R."/>
            <person name="Amedeo P."/>
            <person name="Anderson M.J."/>
            <person name="Crabtree J."/>
            <person name="Silva J.C."/>
            <person name="Badger J.H."/>
            <person name="Albarraq A."/>
            <person name="Angiuoli S."/>
            <person name="Bussey H."/>
            <person name="Bowyer P."/>
            <person name="Cotty P.J."/>
            <person name="Dyer P.S."/>
            <person name="Egan A."/>
            <person name="Galens K."/>
            <person name="Fraser-Liggett C.M."/>
            <person name="Haas B.J."/>
            <person name="Inman J.M."/>
            <person name="Kent R."/>
            <person name="Lemieux S."/>
            <person name="Malavazi I."/>
            <person name="Orvis J."/>
            <person name="Roemer T."/>
            <person name="Ronning C.M."/>
            <person name="Sundaram J.P."/>
            <person name="Sutton G."/>
            <person name="Turner G."/>
            <person name="Venter J.C."/>
            <person name="White O.R."/>
            <person name="Whitty B.R."/>
            <person name="Youngman P."/>
            <person name="Wolfe K.H."/>
            <person name="Goldman G.H."/>
            <person name="Wortman J.R."/>
            <person name="Jiang B."/>
            <person name="Denning D.W."/>
            <person name="Nierman W.C."/>
        </authorList>
    </citation>
    <scope>NUCLEOTIDE SEQUENCE [LARGE SCALE GENOMIC DNA]</scope>
    <source>
        <strain>CBS 144.89 / FGSC A1163 / CEA10</strain>
    </source>
</reference>
<protein>
    <recommendedName>
        <fullName>Signal peptidase complex catalytic subunit sec11</fullName>
        <ecNumber evidence="1">3.4.21.89</ecNumber>
    </recommendedName>
    <alternativeName>
        <fullName>Signal peptidase I</fullName>
    </alternativeName>
</protein>
<accession>B0XWT3</accession>
<feature type="chain" id="PRO_0000412343" description="Signal peptidase complex catalytic subunit sec11">
    <location>
        <begin position="1"/>
        <end position="192"/>
    </location>
</feature>
<feature type="topological domain" description="Cytoplasmic" evidence="3">
    <location>
        <begin position="1"/>
        <end position="18"/>
    </location>
</feature>
<feature type="transmembrane region" description="Helical; Signal-anchor for type II membrane protein" evidence="3">
    <location>
        <begin position="19"/>
        <end position="39"/>
    </location>
</feature>
<feature type="topological domain" description="Lumenal" evidence="3">
    <location>
        <begin position="40"/>
        <end position="192"/>
    </location>
</feature>
<feature type="region of interest" description="C-terminal short (CTS) helix" evidence="2">
    <location>
        <begin position="177"/>
        <end position="188"/>
    </location>
</feature>
<feature type="active site" description="Charge relay system" evidence="1">
    <location>
        <position position="53"/>
    </location>
</feature>
<feature type="active site" description="Charge relay system" evidence="1">
    <location>
        <position position="92"/>
    </location>
</feature>
<feature type="active site" description="Charge relay system" evidence="1">
    <location>
        <position position="133"/>
    </location>
</feature>
<comment type="function">
    <text evidence="1 2">Catalytic component of the signal peptidase complex (SPC) which catalyzes the cleavage of N-terminal signal sequences from nascent proteins as they are translocated into the lumen of the endoplasmic reticulum (By similarity). Specifically cleaves N-terminal signal peptides that contain a hydrophobic alpha-helix (h-region) shorter than 18-20 amino acids (By similarity).</text>
</comment>
<comment type="catalytic activity">
    <reaction evidence="1">
        <text>Cleavage of hydrophobic, N-terminal signal or leader sequences from secreted and periplasmic proteins.</text>
        <dbReference type="EC" id="3.4.21.89"/>
    </reaction>
</comment>
<comment type="subunit">
    <text evidence="1 2">Component of the signal peptidase complex (SPC) composed of a catalytic subunit SEC11 and three accessory subunits SPC1, SPC2 and SPC3 (By similarity). The complex induces a local thinning of the ER membrane which is used to measure the length of the signal peptide (SP) h-region of protein substrates. This ensures the selectivity of the complex towards h-regions shorter than 18-20 amino acids (By similarity). SPC associates with the translocon complex (By similarity).</text>
</comment>
<comment type="subcellular location">
    <subcellularLocation>
        <location evidence="1">Endoplasmic reticulum membrane</location>
        <topology evidence="1">Single-pass type II membrane protein</topology>
    </subcellularLocation>
</comment>
<comment type="domain">
    <text evidence="2">The C-terminal short (CTS) helix is essential for catalytic activity. It may be accommodated as a transmembrane helix in the thinned membrane environment of the complex, similarly to the signal peptide in the complex substrates.</text>
</comment>
<comment type="similarity">
    <text evidence="4">Belongs to the peptidase S26B family.</text>
</comment>
<organism>
    <name type="scientific">Aspergillus fumigatus (strain CBS 144.89 / FGSC A1163 / CEA10)</name>
    <name type="common">Neosartorya fumigata</name>
    <dbReference type="NCBI Taxonomy" id="451804"/>
    <lineage>
        <taxon>Eukaryota</taxon>
        <taxon>Fungi</taxon>
        <taxon>Dikarya</taxon>
        <taxon>Ascomycota</taxon>
        <taxon>Pezizomycotina</taxon>
        <taxon>Eurotiomycetes</taxon>
        <taxon>Eurotiomycetidae</taxon>
        <taxon>Eurotiales</taxon>
        <taxon>Aspergillaceae</taxon>
        <taxon>Aspergillus</taxon>
        <taxon>Aspergillus subgen. Fumigati</taxon>
    </lineage>
</organism>
<name>SEC11_ASPFC</name>
<dbReference type="EC" id="3.4.21.89" evidence="1"/>
<dbReference type="EMBL" id="DS499596">
    <property type="protein sequence ID" value="EDP52467.1"/>
    <property type="molecule type" value="Genomic_DNA"/>
</dbReference>
<dbReference type="SMR" id="B0XWT3"/>
<dbReference type="MEROPS" id="S26.010"/>
<dbReference type="EnsemblFungi" id="EDP52467">
    <property type="protein sequence ID" value="EDP52467"/>
    <property type="gene ID" value="AFUB_036330"/>
</dbReference>
<dbReference type="VEuPathDB" id="FungiDB:AFUB_036330"/>
<dbReference type="HOGENOM" id="CLU_089996_0_0_1"/>
<dbReference type="OrthoDB" id="54181at5052"/>
<dbReference type="PhylomeDB" id="B0XWT3"/>
<dbReference type="Proteomes" id="UP000001699">
    <property type="component" value="Unassembled WGS sequence"/>
</dbReference>
<dbReference type="GO" id="GO:0005787">
    <property type="term" value="C:signal peptidase complex"/>
    <property type="evidence" value="ECO:0007669"/>
    <property type="project" value="EnsemblFungi"/>
</dbReference>
<dbReference type="GO" id="GO:0004252">
    <property type="term" value="F:serine-type endopeptidase activity"/>
    <property type="evidence" value="ECO:0007669"/>
    <property type="project" value="UniProtKB-EC"/>
</dbReference>
<dbReference type="GO" id="GO:0045047">
    <property type="term" value="P:protein targeting to ER"/>
    <property type="evidence" value="ECO:0007669"/>
    <property type="project" value="EnsemblFungi"/>
</dbReference>
<dbReference type="GO" id="GO:0006465">
    <property type="term" value="P:signal peptide processing"/>
    <property type="evidence" value="ECO:0007669"/>
    <property type="project" value="EnsemblFungi"/>
</dbReference>
<dbReference type="CDD" id="cd06530">
    <property type="entry name" value="S26_SPase_I"/>
    <property type="match status" value="1"/>
</dbReference>
<dbReference type="InterPro" id="IPR036286">
    <property type="entry name" value="LexA/Signal_pep-like_sf"/>
</dbReference>
<dbReference type="InterPro" id="IPR019756">
    <property type="entry name" value="Pept_S26A_signal_pept_1_Ser-AS"/>
</dbReference>
<dbReference type="InterPro" id="IPR019533">
    <property type="entry name" value="Peptidase_S26"/>
</dbReference>
<dbReference type="InterPro" id="IPR001733">
    <property type="entry name" value="Peptidase_S26B"/>
</dbReference>
<dbReference type="NCBIfam" id="TIGR02228">
    <property type="entry name" value="sigpep_I_arch"/>
    <property type="match status" value="1"/>
</dbReference>
<dbReference type="PANTHER" id="PTHR10806">
    <property type="entry name" value="SIGNAL PEPTIDASE COMPLEX CATALYTIC SUBUNIT SEC11"/>
    <property type="match status" value="1"/>
</dbReference>
<dbReference type="PANTHER" id="PTHR10806:SF6">
    <property type="entry name" value="SIGNAL PEPTIDASE COMPLEX CATALYTIC SUBUNIT SEC11"/>
    <property type="match status" value="1"/>
</dbReference>
<dbReference type="PRINTS" id="PR00728">
    <property type="entry name" value="SIGNALPTASE"/>
</dbReference>
<dbReference type="SUPFAM" id="SSF51306">
    <property type="entry name" value="LexA/Signal peptidase"/>
    <property type="match status" value="1"/>
</dbReference>
<dbReference type="PROSITE" id="PS00501">
    <property type="entry name" value="SPASE_I_1"/>
    <property type="match status" value="1"/>
</dbReference>
<sequence>MLSFLSSNLSSTRQSMAQVLNFALVLSTAFMLWKGLSVFTASSSPIVVVLSGSMEPAFQRGDLLFLWNRSPRAELGEIVVYNVRGKDIPIVHRVVRTFPQIEGKAKKVKEVNEASSVPPNMLLTKGDNNIADDTELYAKNQDFLHREEDIVGSVRGYMPMVGYVTIMLSEHPWLKTVLLGIMGLMVILQREQ</sequence>
<proteinExistence type="inferred from homology"/>
<keyword id="KW-0256">Endoplasmic reticulum</keyword>
<keyword id="KW-0378">Hydrolase</keyword>
<keyword id="KW-0472">Membrane</keyword>
<keyword id="KW-0645">Protease</keyword>
<keyword id="KW-0735">Signal-anchor</keyword>
<keyword id="KW-0812">Transmembrane</keyword>
<keyword id="KW-1133">Transmembrane helix</keyword>
<evidence type="ECO:0000250" key="1">
    <source>
        <dbReference type="UniProtKB" id="P15367"/>
    </source>
</evidence>
<evidence type="ECO:0000250" key="2">
    <source>
        <dbReference type="UniProtKB" id="P67812"/>
    </source>
</evidence>
<evidence type="ECO:0000255" key="3"/>
<evidence type="ECO:0000305" key="4"/>